<name>SPEE_BUCA5</name>
<organism>
    <name type="scientific">Buchnera aphidicola subsp. Acyrthosiphon pisum (strain 5A)</name>
    <dbReference type="NCBI Taxonomy" id="563178"/>
    <lineage>
        <taxon>Bacteria</taxon>
        <taxon>Pseudomonadati</taxon>
        <taxon>Pseudomonadota</taxon>
        <taxon>Gammaproteobacteria</taxon>
        <taxon>Enterobacterales</taxon>
        <taxon>Erwiniaceae</taxon>
        <taxon>Buchnera</taxon>
    </lineage>
</organism>
<feature type="chain" id="PRO_1000197465" description="Polyamine aminopropyltransferase">
    <location>
        <begin position="1"/>
        <end position="286"/>
    </location>
</feature>
<feature type="domain" description="PABS" evidence="1">
    <location>
        <begin position="5"/>
        <end position="238"/>
    </location>
</feature>
<feature type="active site" description="Proton acceptor" evidence="1">
    <location>
        <position position="158"/>
    </location>
</feature>
<feature type="binding site" evidence="1">
    <location>
        <position position="64"/>
    </location>
    <ligand>
        <name>spermidine</name>
        <dbReference type="ChEBI" id="CHEBI:57834"/>
    </ligand>
</feature>
<feature type="binding site" evidence="1">
    <location>
        <position position="88"/>
    </location>
    <ligand>
        <name>spermidine</name>
        <dbReference type="ChEBI" id="CHEBI:57834"/>
    </ligand>
</feature>
<feature type="binding site" evidence="1">
    <location>
        <position position="108"/>
    </location>
    <ligand>
        <name>S-methyl-5'-thioadenosine</name>
        <dbReference type="ChEBI" id="CHEBI:17509"/>
    </ligand>
</feature>
<feature type="binding site" evidence="1">
    <location>
        <begin position="140"/>
        <end position="141"/>
    </location>
    <ligand>
        <name>S-methyl-5'-thioadenosine</name>
        <dbReference type="ChEBI" id="CHEBI:17509"/>
    </ligand>
</feature>
<feature type="binding site" evidence="1">
    <location>
        <begin position="158"/>
        <end position="161"/>
    </location>
    <ligand>
        <name>spermidine</name>
        <dbReference type="ChEBI" id="CHEBI:57834"/>
    </ligand>
</feature>
<gene>
    <name evidence="1" type="primary">speE</name>
    <name type="ordered locus">BUAP5A_206</name>
</gene>
<comment type="function">
    <text evidence="1">Catalyzes the irreversible transfer of a propylamine group from the amino donor S-adenosylmethioninamine (decarboxy-AdoMet) to putrescine (1,4-diaminobutane) to yield spermidine.</text>
</comment>
<comment type="catalytic activity">
    <reaction evidence="1">
        <text>S-adenosyl 3-(methylsulfanyl)propylamine + putrescine = S-methyl-5'-thioadenosine + spermidine + H(+)</text>
        <dbReference type="Rhea" id="RHEA:12721"/>
        <dbReference type="ChEBI" id="CHEBI:15378"/>
        <dbReference type="ChEBI" id="CHEBI:17509"/>
        <dbReference type="ChEBI" id="CHEBI:57443"/>
        <dbReference type="ChEBI" id="CHEBI:57834"/>
        <dbReference type="ChEBI" id="CHEBI:326268"/>
        <dbReference type="EC" id="2.5.1.16"/>
    </reaction>
</comment>
<comment type="pathway">
    <text evidence="1">Amine and polyamine biosynthesis; spermidine biosynthesis; spermidine from putrescine: step 1/1.</text>
</comment>
<comment type="subunit">
    <text evidence="1">Homodimer or homotetramer.</text>
</comment>
<comment type="subcellular location">
    <subcellularLocation>
        <location evidence="1">Cytoplasm</location>
    </subcellularLocation>
</comment>
<comment type="similarity">
    <text evidence="1">Belongs to the spermidine/spermine synthase family.</text>
</comment>
<protein>
    <recommendedName>
        <fullName evidence="1">Polyamine aminopropyltransferase</fullName>
    </recommendedName>
    <alternativeName>
        <fullName evidence="1">Putrescine aminopropyltransferase</fullName>
        <shortName evidence="1">PAPT</shortName>
    </alternativeName>
    <alternativeName>
        <fullName evidence="1">Spermidine synthase</fullName>
        <shortName evidence="1">SPDS</shortName>
        <shortName evidence="1">SPDSY</shortName>
        <ecNumber evidence="1">2.5.1.16</ecNumber>
    </alternativeName>
</protein>
<sequence>MDHKKTWHEKLYCHLGQYFLIEKMLYKKKTPHHQVMIFKNSVFGKIMVIDDIVQTTERDEFIYHEMLTHVPIIAHGSIKSVLIIGGGDGGILREVCRYKMIENITMVEIDVNIIDLCKKYFPNHSNQAYQDSRLNLIIDDGLNFIKRTKEKFDLIISDSTDPIGCGKNLFRSEFYFNCKNHLEENGIFVAQNGVFFLQKNETILTYKNLKKYFYDTRFYQANVPTYYGGVMVFAWGTNNIEYRKNSLEKIQIRIKNTKLDFNYYNAKIHISSFYLPQYILNELNES</sequence>
<proteinExistence type="inferred from homology"/>
<reference key="1">
    <citation type="journal article" date="2009" name="Science">
        <title>The dynamics and time scale of ongoing genomic erosion in symbiotic bacteria.</title>
        <authorList>
            <person name="Moran N.A."/>
            <person name="McLaughlin H.J."/>
            <person name="Sorek R."/>
        </authorList>
    </citation>
    <scope>NUCLEOTIDE SEQUENCE [LARGE SCALE GENOMIC DNA]</scope>
    <source>
        <strain>5A</strain>
    </source>
</reference>
<evidence type="ECO:0000255" key="1">
    <source>
        <dbReference type="HAMAP-Rule" id="MF_00198"/>
    </source>
</evidence>
<keyword id="KW-0963">Cytoplasm</keyword>
<keyword id="KW-0620">Polyamine biosynthesis</keyword>
<keyword id="KW-0745">Spermidine biosynthesis</keyword>
<keyword id="KW-0808">Transferase</keyword>
<accession>B8D908</accession>
<dbReference type="EC" id="2.5.1.16" evidence="1"/>
<dbReference type="EMBL" id="CP001161">
    <property type="protein sequence ID" value="ACL30579.1"/>
    <property type="molecule type" value="Genomic_DNA"/>
</dbReference>
<dbReference type="RefSeq" id="WP_009874167.1">
    <property type="nucleotide sequence ID" value="NC_011833.1"/>
</dbReference>
<dbReference type="SMR" id="B8D908"/>
<dbReference type="KEGG" id="bap:BUAP5A_206"/>
<dbReference type="HOGENOM" id="CLU_048199_1_0_6"/>
<dbReference type="OrthoDB" id="9793120at2"/>
<dbReference type="UniPathway" id="UPA00248">
    <property type="reaction ID" value="UER00314"/>
</dbReference>
<dbReference type="Proteomes" id="UP000006904">
    <property type="component" value="Chromosome"/>
</dbReference>
<dbReference type="GO" id="GO:0005829">
    <property type="term" value="C:cytosol"/>
    <property type="evidence" value="ECO:0007669"/>
    <property type="project" value="TreeGrafter"/>
</dbReference>
<dbReference type="GO" id="GO:0004766">
    <property type="term" value="F:spermidine synthase activity"/>
    <property type="evidence" value="ECO:0007669"/>
    <property type="project" value="UniProtKB-UniRule"/>
</dbReference>
<dbReference type="GO" id="GO:0008295">
    <property type="term" value="P:spermidine biosynthetic process"/>
    <property type="evidence" value="ECO:0007669"/>
    <property type="project" value="UniProtKB-UniRule"/>
</dbReference>
<dbReference type="CDD" id="cd02440">
    <property type="entry name" value="AdoMet_MTases"/>
    <property type="match status" value="1"/>
</dbReference>
<dbReference type="Gene3D" id="2.30.140.10">
    <property type="entry name" value="Spermidine synthase, tetramerisation domain"/>
    <property type="match status" value="1"/>
</dbReference>
<dbReference type="Gene3D" id="3.40.50.150">
    <property type="entry name" value="Vaccinia Virus protein VP39"/>
    <property type="match status" value="1"/>
</dbReference>
<dbReference type="HAMAP" id="MF_00198">
    <property type="entry name" value="Spermidine_synth"/>
    <property type="match status" value="1"/>
</dbReference>
<dbReference type="InterPro" id="IPR030374">
    <property type="entry name" value="PABS"/>
</dbReference>
<dbReference type="InterPro" id="IPR030373">
    <property type="entry name" value="PABS_CS"/>
</dbReference>
<dbReference type="InterPro" id="IPR029063">
    <property type="entry name" value="SAM-dependent_MTases_sf"/>
</dbReference>
<dbReference type="InterPro" id="IPR001045">
    <property type="entry name" value="Spermi_synthase"/>
</dbReference>
<dbReference type="InterPro" id="IPR035246">
    <property type="entry name" value="Spermidine_synt_N"/>
</dbReference>
<dbReference type="InterPro" id="IPR037163">
    <property type="entry name" value="Spermidine_synt_N_sf"/>
</dbReference>
<dbReference type="NCBIfam" id="NF002010">
    <property type="entry name" value="PRK00811.1"/>
    <property type="match status" value="1"/>
</dbReference>
<dbReference type="NCBIfam" id="TIGR00417">
    <property type="entry name" value="speE"/>
    <property type="match status" value="1"/>
</dbReference>
<dbReference type="PANTHER" id="PTHR11558:SF11">
    <property type="entry name" value="SPERMIDINE SYNTHASE"/>
    <property type="match status" value="1"/>
</dbReference>
<dbReference type="PANTHER" id="PTHR11558">
    <property type="entry name" value="SPERMIDINE/SPERMINE SYNTHASE"/>
    <property type="match status" value="1"/>
</dbReference>
<dbReference type="Pfam" id="PF17284">
    <property type="entry name" value="Spermine_synt_N"/>
    <property type="match status" value="1"/>
</dbReference>
<dbReference type="Pfam" id="PF01564">
    <property type="entry name" value="Spermine_synth"/>
    <property type="match status" value="1"/>
</dbReference>
<dbReference type="SUPFAM" id="SSF53335">
    <property type="entry name" value="S-adenosyl-L-methionine-dependent methyltransferases"/>
    <property type="match status" value="1"/>
</dbReference>
<dbReference type="PROSITE" id="PS01330">
    <property type="entry name" value="PABS_1"/>
    <property type="match status" value="1"/>
</dbReference>
<dbReference type="PROSITE" id="PS51006">
    <property type="entry name" value="PABS_2"/>
    <property type="match status" value="1"/>
</dbReference>